<proteinExistence type="inferred from homology"/>
<accession>B7IJP9</accession>
<gene>
    <name evidence="1" type="primary">ppaC</name>
    <name type="ordered locus">BCG9842_B2456</name>
</gene>
<organism>
    <name type="scientific">Bacillus cereus (strain G9842)</name>
    <dbReference type="NCBI Taxonomy" id="405531"/>
    <lineage>
        <taxon>Bacteria</taxon>
        <taxon>Bacillati</taxon>
        <taxon>Bacillota</taxon>
        <taxon>Bacilli</taxon>
        <taxon>Bacillales</taxon>
        <taxon>Bacillaceae</taxon>
        <taxon>Bacillus</taxon>
        <taxon>Bacillus cereus group</taxon>
    </lineage>
</organism>
<sequence>MEKVLVFGHKNPDTDAICSAIAYAELKKELGMNAEPVRLGEISGETQFALDYFKVEGPRFVETVASEVDNVILVDHNERQQSANDIESVRVLEVIDHHRIANFETSDPIYYRCEPVGCTATILNKMYKENGVTIRKEVAGLMLSAIISDSLLFKSPTCTEQDVAAARELAEIAGVDADSYGLEMLKAGADLSGKTMEQLISLDAKEFQMGNAKVEIAQVNAVDTNDVLVHQAELEKVISAVVEEKGLDLFLFVVTDILTNDSVGLAIGKAANVVEKAYNVSLENNTATLKGVVSRKKQIVPVLTEAFQA</sequence>
<feature type="chain" id="PRO_1000192516" description="Probable manganese-dependent inorganic pyrophosphatase">
    <location>
        <begin position="1"/>
        <end position="309"/>
    </location>
</feature>
<feature type="binding site" evidence="1">
    <location>
        <position position="9"/>
    </location>
    <ligand>
        <name>Mn(2+)</name>
        <dbReference type="ChEBI" id="CHEBI:29035"/>
        <label>1</label>
    </ligand>
</feature>
<feature type="binding site" evidence="1">
    <location>
        <position position="13"/>
    </location>
    <ligand>
        <name>Mn(2+)</name>
        <dbReference type="ChEBI" id="CHEBI:29035"/>
        <label>1</label>
    </ligand>
</feature>
<feature type="binding site" evidence="1">
    <location>
        <position position="15"/>
    </location>
    <ligand>
        <name>Mn(2+)</name>
        <dbReference type="ChEBI" id="CHEBI:29035"/>
        <label>2</label>
    </ligand>
</feature>
<feature type="binding site" evidence="1">
    <location>
        <position position="75"/>
    </location>
    <ligand>
        <name>Mn(2+)</name>
        <dbReference type="ChEBI" id="CHEBI:29035"/>
        <label>1</label>
    </ligand>
</feature>
<feature type="binding site" evidence="1">
    <location>
        <position position="75"/>
    </location>
    <ligand>
        <name>Mn(2+)</name>
        <dbReference type="ChEBI" id="CHEBI:29035"/>
        <label>2</label>
    </ligand>
</feature>
<feature type="binding site" evidence="1">
    <location>
        <position position="97"/>
    </location>
    <ligand>
        <name>Mn(2+)</name>
        <dbReference type="ChEBI" id="CHEBI:29035"/>
        <label>2</label>
    </ligand>
</feature>
<feature type="binding site" evidence="1">
    <location>
        <position position="149"/>
    </location>
    <ligand>
        <name>Mn(2+)</name>
        <dbReference type="ChEBI" id="CHEBI:29035"/>
        <label>2</label>
    </ligand>
</feature>
<keyword id="KW-0963">Cytoplasm</keyword>
<keyword id="KW-0378">Hydrolase</keyword>
<keyword id="KW-0464">Manganese</keyword>
<keyword id="KW-0479">Metal-binding</keyword>
<dbReference type="EC" id="3.6.1.1" evidence="1"/>
<dbReference type="EMBL" id="CP001186">
    <property type="protein sequence ID" value="ACK95329.1"/>
    <property type="molecule type" value="Genomic_DNA"/>
</dbReference>
<dbReference type="RefSeq" id="WP_000416871.1">
    <property type="nucleotide sequence ID" value="NC_011772.1"/>
</dbReference>
<dbReference type="SMR" id="B7IJP9"/>
<dbReference type="GeneID" id="72449513"/>
<dbReference type="KEGG" id="bcg:BCG9842_B2456"/>
<dbReference type="HOGENOM" id="CLU_025243_0_1_9"/>
<dbReference type="Proteomes" id="UP000006744">
    <property type="component" value="Chromosome"/>
</dbReference>
<dbReference type="GO" id="GO:0005737">
    <property type="term" value="C:cytoplasm"/>
    <property type="evidence" value="ECO:0007669"/>
    <property type="project" value="UniProtKB-SubCell"/>
</dbReference>
<dbReference type="GO" id="GO:0004427">
    <property type="term" value="F:inorganic diphosphate phosphatase activity"/>
    <property type="evidence" value="ECO:0007669"/>
    <property type="project" value="UniProtKB-UniRule"/>
</dbReference>
<dbReference type="GO" id="GO:0030145">
    <property type="term" value="F:manganese ion binding"/>
    <property type="evidence" value="ECO:0007669"/>
    <property type="project" value="UniProtKB-UniRule"/>
</dbReference>
<dbReference type="FunFam" id="3.10.310.20:FF:000001">
    <property type="entry name" value="Probable manganese-dependent inorganic pyrophosphatase"/>
    <property type="match status" value="1"/>
</dbReference>
<dbReference type="FunFam" id="3.90.1640.10:FF:000001">
    <property type="entry name" value="Probable manganese-dependent inorganic pyrophosphatase"/>
    <property type="match status" value="1"/>
</dbReference>
<dbReference type="Gene3D" id="3.10.310.20">
    <property type="entry name" value="DHHA2 domain"/>
    <property type="match status" value="1"/>
</dbReference>
<dbReference type="Gene3D" id="3.90.1640.10">
    <property type="entry name" value="inorganic pyrophosphatase (n-terminal core)"/>
    <property type="match status" value="1"/>
</dbReference>
<dbReference type="HAMAP" id="MF_00207">
    <property type="entry name" value="PPase_C"/>
    <property type="match status" value="1"/>
</dbReference>
<dbReference type="InterPro" id="IPR001667">
    <property type="entry name" value="DDH_dom"/>
</dbReference>
<dbReference type="InterPro" id="IPR038763">
    <property type="entry name" value="DHH_sf"/>
</dbReference>
<dbReference type="InterPro" id="IPR004097">
    <property type="entry name" value="DHHA2"/>
</dbReference>
<dbReference type="InterPro" id="IPR038222">
    <property type="entry name" value="DHHA2_dom_sf"/>
</dbReference>
<dbReference type="InterPro" id="IPR022934">
    <property type="entry name" value="Mn-dep_inorganic_PyrPase"/>
</dbReference>
<dbReference type="NCBIfam" id="NF003877">
    <property type="entry name" value="PRK05427.1"/>
    <property type="match status" value="1"/>
</dbReference>
<dbReference type="PANTHER" id="PTHR12112">
    <property type="entry name" value="BNIP - RELATED"/>
    <property type="match status" value="1"/>
</dbReference>
<dbReference type="PANTHER" id="PTHR12112:SF22">
    <property type="entry name" value="MANGANESE-DEPENDENT INORGANIC PYROPHOSPHATASE-RELATED"/>
    <property type="match status" value="1"/>
</dbReference>
<dbReference type="Pfam" id="PF01368">
    <property type="entry name" value="DHH"/>
    <property type="match status" value="1"/>
</dbReference>
<dbReference type="Pfam" id="PF02833">
    <property type="entry name" value="DHHA2"/>
    <property type="match status" value="1"/>
</dbReference>
<dbReference type="SMART" id="SM01131">
    <property type="entry name" value="DHHA2"/>
    <property type="match status" value="1"/>
</dbReference>
<dbReference type="SUPFAM" id="SSF64182">
    <property type="entry name" value="DHH phosphoesterases"/>
    <property type="match status" value="1"/>
</dbReference>
<protein>
    <recommendedName>
        <fullName evidence="1">Probable manganese-dependent inorganic pyrophosphatase</fullName>
        <ecNumber evidence="1">3.6.1.1</ecNumber>
    </recommendedName>
    <alternativeName>
        <fullName evidence="1">Pyrophosphate phospho-hydrolase</fullName>
        <shortName evidence="1">PPase</shortName>
    </alternativeName>
</protein>
<evidence type="ECO:0000255" key="1">
    <source>
        <dbReference type="HAMAP-Rule" id="MF_00207"/>
    </source>
</evidence>
<name>PPAC_BACC2</name>
<reference key="1">
    <citation type="submission" date="2008-10" db="EMBL/GenBank/DDBJ databases">
        <title>Genome sequence of Bacillus cereus G9842.</title>
        <authorList>
            <person name="Dodson R.J."/>
            <person name="Durkin A.S."/>
            <person name="Rosovitz M.J."/>
            <person name="Rasko D.A."/>
            <person name="Hoffmaster A."/>
            <person name="Ravel J."/>
            <person name="Sutton G."/>
        </authorList>
    </citation>
    <scope>NUCLEOTIDE SEQUENCE [LARGE SCALE GENOMIC DNA]</scope>
    <source>
        <strain>G9842</strain>
    </source>
</reference>
<comment type="catalytic activity">
    <reaction evidence="1">
        <text>diphosphate + H2O = 2 phosphate + H(+)</text>
        <dbReference type="Rhea" id="RHEA:24576"/>
        <dbReference type="ChEBI" id="CHEBI:15377"/>
        <dbReference type="ChEBI" id="CHEBI:15378"/>
        <dbReference type="ChEBI" id="CHEBI:33019"/>
        <dbReference type="ChEBI" id="CHEBI:43474"/>
        <dbReference type="EC" id="3.6.1.1"/>
    </reaction>
</comment>
<comment type="cofactor">
    <cofactor evidence="1">
        <name>Mn(2+)</name>
        <dbReference type="ChEBI" id="CHEBI:29035"/>
    </cofactor>
    <text evidence="1">Binds 2 manganese ions per subunit.</text>
</comment>
<comment type="subcellular location">
    <subcellularLocation>
        <location evidence="1">Cytoplasm</location>
    </subcellularLocation>
</comment>
<comment type="similarity">
    <text evidence="1">Belongs to the PPase class C family.</text>
</comment>